<reference evidence="13" key="1">
    <citation type="submission" date="2001-05" db="EMBL/GenBank/DDBJ databases">
        <authorList>
            <person name="Ghedin E."/>
            <person name="Blandin G."/>
            <person name="Bartholomeu D."/>
            <person name="Caler E."/>
            <person name="Haas B."/>
            <person name="Hannick L."/>
            <person name="Shallom J."/>
            <person name="Hou L."/>
            <person name="Djikeng A."/>
            <person name="Feldblyum T."/>
            <person name="Hostetler J."/>
            <person name="Johnson J."/>
            <person name="Jones K."/>
            <person name="Koo H.L."/>
            <person name="Larkin C."/>
            <person name="Pai G."/>
            <person name="Peterson J."/>
            <person name="Khalak H.G."/>
            <person name="Salzberg S."/>
            <person name="Simpson A.J."/>
            <person name="Tallon L."/>
            <person name="Van Aken S."/>
            <person name="Wanless D."/>
            <person name="White O."/>
            <person name="Wortman J."/>
            <person name="Fraser C.M."/>
            <person name="El-Sayed N.M.A."/>
        </authorList>
    </citation>
    <scope>NUCLEOTIDE SEQUENCE [GENOMIC DNA]</scope>
    <source>
        <strain evidence="13">927/4 GUTat10.1</strain>
    </source>
</reference>
<reference evidence="14" key="2">
    <citation type="journal article" date="2005" name="Science">
        <title>Comparative genomics of trypanosomatid parasitic protozoa.</title>
        <authorList>
            <person name="El-Sayed N.M."/>
            <person name="Myler P.J."/>
            <person name="Blandin G."/>
            <person name="Berriman M."/>
            <person name="Crabtree J."/>
            <person name="Aggarwal G."/>
            <person name="Caler E."/>
            <person name="Renauld H."/>
            <person name="Worthey E.A."/>
            <person name="Hertz-Fowler C."/>
            <person name="Ghedin E."/>
            <person name="Peacock C."/>
            <person name="Bartholomeu D.C."/>
            <person name="Haas B.J."/>
            <person name="Tran A.N."/>
            <person name="Wortman J.R."/>
            <person name="Alsmark U.C."/>
            <person name="Angiuoli S."/>
            <person name="Anupama A."/>
            <person name="Badger J."/>
            <person name="Bringaud F."/>
            <person name="Cadag E."/>
            <person name="Carlton J.M."/>
            <person name="Cerqueira G.C."/>
            <person name="Creasy T."/>
            <person name="Delcher A.L."/>
            <person name="Djikeng A."/>
            <person name="Embley T.M."/>
            <person name="Hauser C."/>
            <person name="Ivens A.C."/>
            <person name="Kummerfeld S.K."/>
            <person name="Pereira-Leal J.B."/>
            <person name="Nilsson D."/>
            <person name="Peterson J."/>
            <person name="Salzberg S.L."/>
            <person name="Shallom J."/>
            <person name="Silva J.C."/>
            <person name="Sundaram J."/>
            <person name="Westenberger S."/>
            <person name="White O."/>
            <person name="Melville S.E."/>
            <person name="Donelson J.E."/>
            <person name="Andersson B."/>
            <person name="Stuart K.D."/>
            <person name="Hall N."/>
        </authorList>
    </citation>
    <scope>NUCLEOTIDE SEQUENCE [LARGE SCALE GENOMIC DNA]</scope>
    <source>
        <strain evidence="14">927/4 GUTat10.1</strain>
    </source>
</reference>
<reference evidence="15" key="3">
    <citation type="journal article" date="2005" name="Science">
        <title>The genome of the African trypanosome Trypanosoma brucei.</title>
        <authorList>
            <person name="Berriman M."/>
            <person name="Ghedin E."/>
            <person name="Hertz-Fowler C."/>
            <person name="Blandin G."/>
            <person name="Renauld H."/>
            <person name="Bartholomeu D.C."/>
            <person name="Lennard N.J."/>
            <person name="Caler E."/>
            <person name="Hamlin N.E."/>
            <person name="Haas B."/>
            <person name="Bohme U."/>
            <person name="Hannick L."/>
            <person name="Aslett M.A."/>
            <person name="Shallom J."/>
            <person name="Marcello L."/>
            <person name="Hou L."/>
            <person name="Wickstead B."/>
            <person name="Alsmark U.C.M."/>
            <person name="Arrowsmith C."/>
            <person name="Atkin R.J."/>
            <person name="Barron A.J."/>
            <person name="Bringaud F."/>
            <person name="Brooks K."/>
            <person name="Carrington M."/>
            <person name="Cherevach I."/>
            <person name="Chillingworth T.J."/>
            <person name="Churcher C."/>
            <person name="Clark L.N."/>
            <person name="Corton C.H."/>
            <person name="Cronin A."/>
            <person name="Davies R.M."/>
            <person name="Doggett J."/>
            <person name="Djikeng A."/>
            <person name="Feldblyum T."/>
            <person name="Field M.C."/>
            <person name="Fraser A."/>
            <person name="Goodhead I."/>
            <person name="Hance Z."/>
            <person name="Harper D."/>
            <person name="Harris B.R."/>
            <person name="Hauser H."/>
            <person name="Hostetler J."/>
            <person name="Ivens A."/>
            <person name="Jagels K."/>
            <person name="Johnson D."/>
            <person name="Johnson J."/>
            <person name="Jones K."/>
            <person name="Kerhornou A.X."/>
            <person name="Koo H."/>
            <person name="Larke N."/>
            <person name="Landfear S."/>
            <person name="Larkin C."/>
            <person name="Leech V."/>
            <person name="Line A."/>
            <person name="Lord A."/>
            <person name="Macleod A."/>
            <person name="Mooney P.J."/>
            <person name="Moule S."/>
            <person name="Martin D.M."/>
            <person name="Morgan G.W."/>
            <person name="Mungall K."/>
            <person name="Norbertczak H."/>
            <person name="Ormond D."/>
            <person name="Pai G."/>
            <person name="Peacock C.S."/>
            <person name="Peterson J."/>
            <person name="Quail M.A."/>
            <person name="Rabbinowitsch E."/>
            <person name="Rajandream M.A."/>
            <person name="Reitter C."/>
            <person name="Salzberg S.L."/>
            <person name="Sanders M."/>
            <person name="Schobel S."/>
            <person name="Sharp S."/>
            <person name="Simmonds M."/>
            <person name="Simpson A.J."/>
            <person name="Tallon L."/>
            <person name="Turner C.M."/>
            <person name="Tait A."/>
            <person name="Tivey A.R."/>
            <person name="Van Aken S."/>
            <person name="Walker D."/>
            <person name="Wanless D."/>
            <person name="Wang S."/>
            <person name="White B."/>
            <person name="White O."/>
            <person name="Whitehead S."/>
            <person name="Woodward J."/>
            <person name="Wortman J."/>
            <person name="Adams M.D."/>
            <person name="Embley T.M."/>
            <person name="Gull K."/>
            <person name="Ullu E."/>
            <person name="Barry J.D."/>
            <person name="Fairlamb A.H."/>
            <person name="Opperdoes F."/>
            <person name="Barrell B.G."/>
            <person name="Donelson J.E."/>
            <person name="Hall N."/>
            <person name="Fraser C.M."/>
            <person name="Melville S.E."/>
            <person name="El-Sayed N.M.A."/>
        </authorList>
    </citation>
    <scope>NUCLEOTIDE SEQUENCE [LARGE SCALE GENOMIC DNA]</scope>
    <source>
        <strain evidence="15">927/4 GUTat10.1</strain>
    </source>
</reference>
<reference evidence="11" key="4">
    <citation type="journal article" date="2010" name="J. Biol. Chem.">
        <title>REH2 RNA helicase in kinetoplastid mitochondria: ribonucleoprotein complexes and essential motifs for unwinding and guide RNA (gRNA) binding.</title>
        <authorList>
            <person name="Hernandez A."/>
            <person name="Madina B.R."/>
            <person name="Ro K."/>
            <person name="Wohlschlegel J.A."/>
            <person name="Willard B."/>
            <person name="Kinter M.T."/>
            <person name="Cruz-Reyes J."/>
        </authorList>
    </citation>
    <scope>FUNCTION</scope>
    <scope>CATALYTIC ACTIVITY</scope>
    <scope>INTERACTION WITH THE RECC COMPLEX</scope>
    <scope>SUBCELLULAR LOCATION</scope>
    <scope>DEVELOPMENTAL STAGE</scope>
    <scope>DOMAIN</scope>
    <scope>MOTIF</scope>
    <scope>IDENTIFICATION BY MASS SPECTROMETRY</scope>
    <scope>DISRUPTION PHENOTYPE</scope>
    <scope>MUTAGENESIS OF 1026-LYS--LEU-1092 AND 1366-GLY-LYS-1367</scope>
    <source>
        <strain evidence="6">427</strain>
    </source>
</reference>
<reference evidence="11" key="5">
    <citation type="journal article" date="2015" name="PLoS ONE">
        <title>Native Variants of the MRB1 Complex Exhibit Specialized Functions in Kinetoplastid RNA Editing.</title>
        <authorList>
            <person name="Madina B.R."/>
            <person name="Kumar V."/>
            <person name="Mooers B.H."/>
            <person name="Cruz-Reyes J."/>
        </authorList>
    </citation>
    <scope>FUNCTION</scope>
    <scope>INTERACTION WITH THE GRBC COMPLEX</scope>
    <scope>SUBCELLULAR LOCATION</scope>
    <scope>DEVELOPMENTAL STAGE</scope>
    <scope>DOMAIN</scope>
    <scope>DISRUPTION PHENOTYPE</scope>
    <scope>MUTAGENESIS OF LYS-1078; ALA-1086 AND 1366-GLY-LYS-1367</scope>
    <source>
        <strain evidence="7">427</strain>
    </source>
</reference>
<reference evidence="11" key="6">
    <citation type="journal article" date="2016" name="J. Biol. Chem.">
        <title>REH2C Helicase and GRBC Subcomplexes May Base Pair through mRNA and Small Guide RNA in Kinetoplastid Editosomes.</title>
        <authorList>
            <person name="Kumar V."/>
            <person name="Madina B.R."/>
            <person name="Gulati S."/>
            <person name="Vashisht A.A."/>
            <person name="Kanyumbu C."/>
            <person name="Pieters B."/>
            <person name="Shakir A."/>
            <person name="Wohlschlegel J.A."/>
            <person name="Read L.K."/>
            <person name="Mooers B.H.M."/>
            <person name="Cruz-Reyes J."/>
        </authorList>
    </citation>
    <scope>FUNCTION</scope>
    <scope>CATALYTIC ACTIVITY</scope>
    <scope>IDENTIFICATION IN THE REH2C COMPLEX</scope>
    <scope>INTERACTION WITH THE GRBC COMPLEX; RECC COMPLEX; REMC COMPLEX AND H2F1</scope>
    <scope>SUBCELLULAR LOCATION</scope>
    <scope>DEVELOPMENTAL STAGE</scope>
    <scope>DISRUPTION PHENOTYPE</scope>
    <source>
        <strain evidence="8">427</strain>
    </source>
</reference>
<reference evidence="11" key="7">
    <citation type="journal article" date="2019" name="PLoS ONE">
        <title>Protein features for assembly of the RNA editing helicase 2 subcomplex (REH2C) in Trypanosome holo-editosomes.</title>
        <authorList>
            <person name="Kumar V."/>
            <person name="Doharey P.K."/>
            <person name="Gulati S."/>
            <person name="Meehan J."/>
            <person name="Martinez M.G."/>
            <person name="Hughes K."/>
            <person name="Mooers B.H.M."/>
            <person name="Cruz-Reyes J."/>
        </authorList>
    </citation>
    <scope>FUNCTION</scope>
    <scope>CATALYTIC ACTIVITY</scope>
    <scope>IDENTIFICATION IN THE REH2C COMPLEX</scope>
    <scope>SUBCELLULAR LOCATION</scope>
    <scope>DEVELOPMENTAL STAGE</scope>
    <scope>MUTAGENESIS OF 34-GLN--LEU-1093; 34-GLN--PRO-1023; LYS-1078; ALA-1086; 1908-THR--SER-2167; ARG-1979; HIS-1998; ARG-1999; ARG-2023 AND 2045-MET--SER-2167</scope>
    <source>
        <strain evidence="9">427</strain>
    </source>
</reference>
<feature type="transit peptide" description="Mitochondrion" evidence="1">
    <location>
        <begin position="1"/>
        <end position="30"/>
    </location>
</feature>
<feature type="chain" id="PRO_0000455617" description="RNA editing associated helicase 2" evidence="1">
    <location>
        <begin position="31"/>
        <end position="2167"/>
    </location>
</feature>
<feature type="domain" description="DRBM" evidence="2">
    <location>
        <begin position="1024"/>
        <end position="1095"/>
    </location>
</feature>
<feature type="domain" description="Helicase ATP-binding" evidence="3">
    <location>
        <begin position="1348"/>
        <end position="1513"/>
    </location>
</feature>
<feature type="domain" description="Helicase C-terminal" evidence="4">
    <location>
        <begin position="1585"/>
        <end position="1762"/>
    </location>
</feature>
<feature type="region of interest" description="Disordered" evidence="5">
    <location>
        <begin position="503"/>
        <end position="593"/>
    </location>
</feature>
<feature type="region of interest" description="Disordered" evidence="5">
    <location>
        <begin position="937"/>
        <end position="969"/>
    </location>
</feature>
<feature type="region of interest" description="Disordered" evidence="5">
    <location>
        <begin position="2132"/>
        <end position="2167"/>
    </location>
</feature>
<feature type="short sequence motif" description="Important for binding to gRNA" evidence="6">
    <location>
        <begin position="1366"/>
        <end position="1367"/>
    </location>
</feature>
<feature type="short sequence motif" description="DEAH box" evidence="3">
    <location>
        <begin position="1460"/>
        <end position="1463"/>
    </location>
</feature>
<feature type="compositionally biased region" description="Low complexity" evidence="5">
    <location>
        <begin position="532"/>
        <end position="541"/>
    </location>
</feature>
<feature type="compositionally biased region" description="Polar residues" evidence="5">
    <location>
        <begin position="2151"/>
        <end position="2161"/>
    </location>
</feature>
<feature type="binding site" evidence="3">
    <location>
        <begin position="1361"/>
        <end position="1368"/>
    </location>
    <ligand>
        <name>ATP</name>
        <dbReference type="ChEBI" id="CHEBI:30616"/>
    </ligand>
</feature>
<feature type="mutagenesis site" description="Severe reduction in the interaction with H2F1 and GAP1/GRBC2." evidence="9">
    <location>
        <begin position="34"/>
        <end position="1093"/>
    </location>
</feature>
<feature type="mutagenesis site" description="Severe reduction in the interaction with H2F1 and GAP1/GRBC2." evidence="9">
    <location>
        <begin position="34"/>
        <end position="1023"/>
    </location>
</feature>
<feature type="mutagenesis site" description="Loss of RNA helicase activity. Loss of binding to gRNA. Impaired association with several mRNA editing complexes." evidence="6">
    <original>KTVLQRYCNVANVNYPTFWKSRTVGPISCRVCLTTIEVPGHEYLRASGVAWNKEASQRQAAMHALAL</original>
    <variation>TR</variation>
    <location>
        <begin position="1026"/>
        <end position="1092"/>
    </location>
</feature>
<feature type="mutagenesis site" description="Loss of interaction with gRNA, unedited mRNAs, edited mRNAs at block 1 or at 5' distal blocks, and GAP1/GRBC2 but not with H2F1; when associated with D-1086." evidence="7 9">
    <original>K</original>
    <variation>A</variation>
    <location>
        <position position="1078"/>
    </location>
</feature>
<feature type="mutagenesis site" description="Loss of interaction with gRNA, unedited mRNAs, edited mRNAs at block 1 or at 5' distal blocks, and GAP1/GRBC2 but not with H2F1; when associated with A-1078." evidence="7 9">
    <original>A</original>
    <variation>D</variation>
    <location>
        <position position="1086"/>
    </location>
</feature>
<feature type="mutagenesis site" description="Loss of RNA helicase activity. Loss of interaction with gRNA, unedited mRNAs and edited mRNAs at block 1 or at 5' distal blocks. Loss of interaction with GAP1/GRBC2." evidence="6 7">
    <original>GK</original>
    <variation>AQ</variation>
    <location>
        <begin position="1366"/>
        <end position="1367"/>
    </location>
</feature>
<feature type="mutagenesis site" description="Severe reduction in the interaction with H2F1 and GAP1/GRBC2." evidence="9">
    <location>
        <begin position="1908"/>
        <end position="2167"/>
    </location>
</feature>
<feature type="mutagenesis site" description="Does not affect the interaction with H2F1 and GAP1/GRBC2." evidence="9">
    <original>R</original>
    <variation>A</variation>
    <location>
        <position position="1979"/>
    </location>
</feature>
<feature type="mutagenesis site" description="Moderate reduction in the interaction with GAP1/GRBC2. Interaction with H2F1 is normal. Severe reduction in the interaction with H2F1 and GAP1/GRBC2; when associated with E-1999." evidence="9">
    <original>H</original>
    <variation>E</variation>
    <location>
        <position position="1998"/>
    </location>
</feature>
<feature type="mutagenesis site" description="Reduction in the interaction with H2F1 and GAP1/GRBC2. Severe reduction in the interaction with H2F1 and GAP1/GRBC2; when associated with E-1998." evidence="9">
    <original>R</original>
    <variation>E</variation>
    <location>
        <position position="1999"/>
    </location>
</feature>
<feature type="mutagenesis site" description="Moderate reduction in the interaction with GAP1/GRBC2. Interaction with H2F1 is normal." evidence="9">
    <original>R</original>
    <variation>A</variation>
    <location>
        <position position="2023"/>
    </location>
</feature>
<feature type="mutagenesis site" description="Severe reduction in the interaction with H2F1 and GAP1/GRBC2." evidence="9">
    <location>
        <begin position="2045"/>
        <end position="2167"/>
    </location>
</feature>
<protein>
    <recommendedName>
        <fullName evidence="10">RNA editing associated helicase 2</fullName>
        <ecNumber evidence="6 9 12">3.6.4.13</ecNumber>
    </recommendedName>
    <alternativeName>
        <fullName evidence="11">ATP-dependent RNA helicase REH2</fullName>
    </alternativeName>
</protein>
<gene>
    <name evidence="10" type="primary">REH2</name>
    <name evidence="13" type="ORF">Tb927.4.1500</name>
</gene>
<keyword id="KW-0067">ATP-binding</keyword>
<keyword id="KW-0347">Helicase</keyword>
<keyword id="KW-0378">Hydrolase</keyword>
<keyword id="KW-0496">Mitochondrion</keyword>
<keyword id="KW-0507">mRNA processing</keyword>
<keyword id="KW-0547">Nucleotide-binding</keyword>
<keyword id="KW-1185">Reference proteome</keyword>
<keyword id="KW-0694">RNA-binding</keyword>
<keyword id="KW-0809">Transit peptide</keyword>
<proteinExistence type="evidence at protein level"/>
<evidence type="ECO:0000255" key="1"/>
<evidence type="ECO:0000255" key="2">
    <source>
        <dbReference type="PROSITE-ProRule" id="PRU00266"/>
    </source>
</evidence>
<evidence type="ECO:0000255" key="3">
    <source>
        <dbReference type="PROSITE-ProRule" id="PRU00541"/>
    </source>
</evidence>
<evidence type="ECO:0000255" key="4">
    <source>
        <dbReference type="PROSITE-ProRule" id="PRU00542"/>
    </source>
</evidence>
<evidence type="ECO:0000256" key="5">
    <source>
        <dbReference type="SAM" id="MobiDB-lite"/>
    </source>
</evidence>
<evidence type="ECO:0000269" key="6">
    <source>
    </source>
</evidence>
<evidence type="ECO:0000269" key="7">
    <source>
    </source>
</evidence>
<evidence type="ECO:0000269" key="8">
    <source>
    </source>
</evidence>
<evidence type="ECO:0000269" key="9">
    <source>
    </source>
</evidence>
<evidence type="ECO:0000303" key="10">
    <source>
    </source>
</evidence>
<evidence type="ECO:0000305" key="11"/>
<evidence type="ECO:0000305" key="12">
    <source>
    </source>
</evidence>
<evidence type="ECO:0000312" key="13">
    <source>
        <dbReference type="EMBL" id="AAX79889.1"/>
    </source>
</evidence>
<evidence type="ECO:0000312" key="14">
    <source>
        <dbReference type="EMBL" id="AAZ10741.1"/>
    </source>
</evidence>
<evidence type="ECO:0000312" key="15">
    <source>
        <dbReference type="Proteomes" id="UP000008524"/>
    </source>
</evidence>
<name>REH2_TRYB2</name>
<accession>Q581T1</accession>
<accession>D6XF86</accession>
<sequence>MRAIRLTVACRYLGPFRSVTLSPVVLPVRLFQTQEITPGEVSLVEATDESDRAFGETRKEDFSFDGSSEFPECFKDTKHVDTFSRARVVSFIKRFSQGAVTSSSEVFEGREIVNDNGTPLYHSRVRLPFRSHTGELWAHGVACNSKDAELLAAMHAEHIIDEFGYHIYTLPSMQRKHAEAARKAGRWAPLPDELERTQSPVRVPLPLRRIVDRDETEGGKWLLIDMRPNHYISPSHTLLSPCLFDTTAVHRIKSFLDEHKLSFAQLCTSVEEPGEGGGQSWYVATVSLPPELSTFSEIKAQGKALNREAAVTLACMHAELVLDAHSICLYPSDSTKQKQHALAAWSYGRPAPLPGEDQKNPSHVVCPLPLKQLAVRREDRISCISYEEDIIRRHRALTDQTCEFIETPTLDSSAVEQLKQFLQRENVPRTDPFLVEEVNGYYKATVVLPLPDLYGIRGGVGIAMNATDARVLAAMHAIDVLNILGFHLMDGSTARAEWIAARRARGESVPADTRDPNVLSPSGRRRVATGNSSTQTPSSSTNARSVAAAPDVGTSDPTAPQNTKRRVAKRARVADAQPTEEKDAANSDSDEATSYLKMRETVSKELWNLEPDSPDGYIMVSPTDPETRTQFEQALYSPRQVDLGSKSRIKNYLASVGRRIEEVFFVQRIEAEDNGGQAICRCAVNLPVPRRFGDRIALGEAVDPKDAENLAAMHAELILDTLGIPIYTDSALQRLHVRLCAKCGRNAPVEYSESVAAATASPPPLRREVVGSIHWENKSKRRRAAISVQKGGGPANSQETTSALREDEEPLIAPKERREYTFVPEKDLDLVSRARVHYYLRRNGIAKLEPEYRMELRGLGNVLHIAELTLPLPDVYGKRVAHGSALTKRDAEILCWMHAEQILDAVGLCLFDNLPMLQRRHVECVKRLGRWAPLVSENATKPPHTPTPLPLTLGTTQEKPQYPTPPTNVRQDWEQYAQECQRYIEINVMREHNIFYEMGKTPRTGDETYDAALAEVESMPIDPDAKTVLQRYCNVANVNYPTFWKSRTVGPISCRVCLTTIEVPGHEYLRASGVAWNKEASQRQAAMHALALLRRVEPDFAEFEKQIKAEVVDKVNLVDPAAVLDEEAPVLRRTARVSKKSLGNWDPVSKDFSHEGKVRIIELFTVCFGLQPPLVRHLNRRSGSFVQHFTVVEVTDEDGKTWVGTGRDAGPRFNEPAAFDDLFSKLSRGVQGFQALMDLIRAHPHLDPEHIANVSLTDSQKERILKAVDGLPMVEEEDVAHPEQWADADSDRGIGIMALIAMDASQRAQESQELEAKLQAKLTNEEYQTRYASQRQRLRIYEKRDEILRAISSNQIVIICGTTGCGKTTQVPQYILDDMTEKGMGGDCSIVITQPRRLSAVSIARRVAAERLESIGETCGYSIRLDAKPGRNINFCTSGVLLRLLHSAPLLNGINYLIIDEIHERDINSDFLLILLRQLLHRRKDLHVILMSATLQADQFGKYFGNAPIINVEGYVHAVEEMYLEDLVPIATERNVMTPLLKEAAAALERNGAADGFCPTVVPPTAKYGFLEATADIDYMTIQIAIDHAVRSLDLTDSSILVFLPGWDEINRAKEILERNAKFHIICLHSSVGAEEQMRCFLPAPEGKIKLILSTNIAESGVTIDDVAAVIDVGRGKEKSYVMRKGTTSVGRNEMGSMSQLVTVYASRANCVQRRGRVGRTRPGMCIRLYSKKHFQSLHDFQTPEMLRTHLDSLCLQILALDLGDPADFLQQALEPPSSDHIEAAMKRLHELGATTSTRQLTPLGLRLSRLPVAPKVGKMVIMGAILRCLDSALTIAGVSDTDVFISTREHREAVRLHKEDLSYGTQSDVIASVNAFNFWVTSHYAKTPAEVVYDLQERMLSVPQLLTVSKYKQQFFEIVAGSGFIHMKQNYKDAKNKDRADIFVDQSEYSADSLNVGLVKCVVASGLFPNVVMNRGKRLMRNKLANRLDPSSASVVHRTSQENIGQPYFVYDELVKSSESERLLVRDLTNVSLWTILLMGTSSMPVTYRDDLNLAVVDEWIMFRATFGTLELIRKFKRALNVCLGRKFMNPNDEENNAKLEELRCIIKELVCTPFKPNDLAEKPWEEKGVIIEPCTEPKGGSSEAEKTHVNSSHTPTTSAEAGGDS</sequence>
<dbReference type="EC" id="3.6.4.13" evidence="6 9 12"/>
<dbReference type="EMBL" id="AC091702">
    <property type="protein sequence ID" value="AAX79889.1"/>
    <property type="molecule type" value="Genomic_DNA"/>
</dbReference>
<dbReference type="EMBL" id="CP000067">
    <property type="protein sequence ID" value="AAZ10741.1"/>
    <property type="molecule type" value="Genomic_DNA"/>
</dbReference>
<dbReference type="RefSeq" id="XP_844300.1">
    <property type="nucleotide sequence ID" value="XM_839207.1"/>
</dbReference>
<dbReference type="SMR" id="Q581T1"/>
<dbReference type="STRING" id="185431.Q581T1"/>
<dbReference type="PaxDb" id="5691-AAZ10741"/>
<dbReference type="GeneID" id="3656679"/>
<dbReference type="KEGG" id="tbr:Tb927.4.1500"/>
<dbReference type="VEuPathDB" id="TriTrypDB:Tb927.4.1500"/>
<dbReference type="eggNOG" id="KOG0920">
    <property type="taxonomic scope" value="Eukaryota"/>
</dbReference>
<dbReference type="InParanoid" id="Q581T1"/>
<dbReference type="OMA" id="SRANCVQ"/>
<dbReference type="OrthoDB" id="5600252at2759"/>
<dbReference type="Proteomes" id="UP000008524">
    <property type="component" value="Chromosome 4"/>
</dbReference>
<dbReference type="GO" id="GO:0097014">
    <property type="term" value="C:ciliary plasm"/>
    <property type="evidence" value="ECO:0000314"/>
    <property type="project" value="GeneDB"/>
</dbReference>
<dbReference type="GO" id="GO:0005737">
    <property type="term" value="C:cytoplasm"/>
    <property type="evidence" value="ECO:0000314"/>
    <property type="project" value="GeneDB"/>
</dbReference>
<dbReference type="GO" id="GO:0020023">
    <property type="term" value="C:kinetoplast"/>
    <property type="evidence" value="ECO:0000314"/>
    <property type="project" value="GeneDB"/>
</dbReference>
<dbReference type="GO" id="GO:0031019">
    <property type="term" value="C:mitochondrial mRNA editing complex"/>
    <property type="evidence" value="ECO:0000314"/>
    <property type="project" value="UniProtKB"/>
</dbReference>
<dbReference type="GO" id="GO:0005739">
    <property type="term" value="C:mitochondrion"/>
    <property type="evidence" value="ECO:0000314"/>
    <property type="project" value="UniProtKB"/>
</dbReference>
<dbReference type="GO" id="GO:0031981">
    <property type="term" value="C:nuclear lumen"/>
    <property type="evidence" value="ECO:0000314"/>
    <property type="project" value="GeneDB"/>
</dbReference>
<dbReference type="GO" id="GO:0005730">
    <property type="term" value="C:nucleolus"/>
    <property type="evidence" value="ECO:0000318"/>
    <property type="project" value="GO_Central"/>
</dbReference>
<dbReference type="GO" id="GO:1990904">
    <property type="term" value="C:ribonucleoprotein complex"/>
    <property type="evidence" value="ECO:0000318"/>
    <property type="project" value="GO_Central"/>
</dbReference>
<dbReference type="GO" id="GO:0034458">
    <property type="term" value="F:3'-5' RNA helicase activity"/>
    <property type="evidence" value="ECO:0000314"/>
    <property type="project" value="UniProtKB"/>
</dbReference>
<dbReference type="GO" id="GO:0005524">
    <property type="term" value="F:ATP binding"/>
    <property type="evidence" value="ECO:0007669"/>
    <property type="project" value="UniProtKB-KW"/>
</dbReference>
<dbReference type="GO" id="GO:0004386">
    <property type="term" value="F:helicase activity"/>
    <property type="evidence" value="ECO:0000318"/>
    <property type="project" value="GO_Central"/>
</dbReference>
<dbReference type="GO" id="GO:0016787">
    <property type="term" value="F:hydrolase activity"/>
    <property type="evidence" value="ECO:0007669"/>
    <property type="project" value="UniProtKB-KW"/>
</dbReference>
<dbReference type="GO" id="GO:0003729">
    <property type="term" value="F:mRNA binding"/>
    <property type="evidence" value="ECO:0000314"/>
    <property type="project" value="GeneDB"/>
</dbReference>
<dbReference type="GO" id="GO:0003723">
    <property type="term" value="F:RNA binding"/>
    <property type="evidence" value="ECO:0000314"/>
    <property type="project" value="GeneDB"/>
</dbReference>
<dbReference type="GO" id="GO:0016554">
    <property type="term" value="P:cytidine to uridine editing"/>
    <property type="evidence" value="ECO:0000314"/>
    <property type="project" value="GeneDB"/>
</dbReference>
<dbReference type="GO" id="GO:0000963">
    <property type="term" value="P:mitochondrial RNA processing"/>
    <property type="evidence" value="ECO:0000314"/>
    <property type="project" value="UniProtKB"/>
</dbReference>
<dbReference type="GO" id="GO:0016556">
    <property type="term" value="P:mRNA modification"/>
    <property type="evidence" value="ECO:0000315"/>
    <property type="project" value="GeneDB"/>
</dbReference>
<dbReference type="GO" id="GO:0006397">
    <property type="term" value="P:mRNA processing"/>
    <property type="evidence" value="ECO:0007669"/>
    <property type="project" value="UniProtKB-KW"/>
</dbReference>
<dbReference type="GO" id="GO:0048255">
    <property type="term" value="P:mRNA stabilization"/>
    <property type="evidence" value="ECO:0000314"/>
    <property type="project" value="GeneDB"/>
</dbReference>
<dbReference type="CDD" id="cd17917">
    <property type="entry name" value="DEXHc_RHA-like"/>
    <property type="match status" value="1"/>
</dbReference>
<dbReference type="CDD" id="cd18791">
    <property type="entry name" value="SF2_C_RHA"/>
    <property type="match status" value="1"/>
</dbReference>
<dbReference type="FunFam" id="3.40.50.300:FF:002676">
    <property type="entry name" value="ATP-dependent DEAH-box RNA helicase, putative"/>
    <property type="match status" value="1"/>
</dbReference>
<dbReference type="FunFam" id="3.40.50.300:FF:000500">
    <property type="entry name" value="ATP-dependent RNA helicase DHX29"/>
    <property type="match status" value="1"/>
</dbReference>
<dbReference type="FunFam" id="1.20.120.1080:FF:000002">
    <property type="entry name" value="Putative ATP-dependent RNA helicase DHX36"/>
    <property type="match status" value="1"/>
</dbReference>
<dbReference type="Gene3D" id="1.20.120.1080">
    <property type="match status" value="1"/>
</dbReference>
<dbReference type="Gene3D" id="3.40.50.300">
    <property type="entry name" value="P-loop containing nucleotide triphosphate hydrolases"/>
    <property type="match status" value="2"/>
</dbReference>
<dbReference type="InterPro" id="IPR011545">
    <property type="entry name" value="DEAD/DEAH_box_helicase_dom"/>
</dbReference>
<dbReference type="InterPro" id="IPR014720">
    <property type="entry name" value="dsRBD_dom"/>
</dbReference>
<dbReference type="InterPro" id="IPR048333">
    <property type="entry name" value="HA2_WH"/>
</dbReference>
<dbReference type="InterPro" id="IPR007502">
    <property type="entry name" value="Helicase-assoc_dom"/>
</dbReference>
<dbReference type="InterPro" id="IPR014001">
    <property type="entry name" value="Helicase_ATP-bd"/>
</dbReference>
<dbReference type="InterPro" id="IPR001650">
    <property type="entry name" value="Helicase_C-like"/>
</dbReference>
<dbReference type="InterPro" id="IPR027417">
    <property type="entry name" value="P-loop_NTPase"/>
</dbReference>
<dbReference type="PANTHER" id="PTHR18934">
    <property type="entry name" value="ATP-DEPENDENT RNA HELICASE"/>
    <property type="match status" value="1"/>
</dbReference>
<dbReference type="PANTHER" id="PTHR18934:SF119">
    <property type="entry name" value="ATP-DEPENDENT RNA HELICASE A"/>
    <property type="match status" value="1"/>
</dbReference>
<dbReference type="Pfam" id="PF00270">
    <property type="entry name" value="DEAD"/>
    <property type="match status" value="1"/>
</dbReference>
<dbReference type="Pfam" id="PF00035">
    <property type="entry name" value="dsrm"/>
    <property type="match status" value="1"/>
</dbReference>
<dbReference type="Pfam" id="PF04408">
    <property type="entry name" value="HA2_N"/>
    <property type="match status" value="1"/>
</dbReference>
<dbReference type="Pfam" id="PF00271">
    <property type="entry name" value="Helicase_C"/>
    <property type="match status" value="1"/>
</dbReference>
<dbReference type="SMART" id="SM00487">
    <property type="entry name" value="DEXDc"/>
    <property type="match status" value="1"/>
</dbReference>
<dbReference type="SMART" id="SM00847">
    <property type="entry name" value="HA2"/>
    <property type="match status" value="1"/>
</dbReference>
<dbReference type="SMART" id="SM00490">
    <property type="entry name" value="HELICc"/>
    <property type="match status" value="1"/>
</dbReference>
<dbReference type="SUPFAM" id="SSF54768">
    <property type="entry name" value="dsRNA-binding domain-like"/>
    <property type="match status" value="1"/>
</dbReference>
<dbReference type="SUPFAM" id="SSF52540">
    <property type="entry name" value="P-loop containing nucleoside triphosphate hydrolases"/>
    <property type="match status" value="1"/>
</dbReference>
<dbReference type="PROSITE" id="PS50137">
    <property type="entry name" value="DS_RBD"/>
    <property type="match status" value="1"/>
</dbReference>
<dbReference type="PROSITE" id="PS51192">
    <property type="entry name" value="HELICASE_ATP_BIND_1"/>
    <property type="match status" value="1"/>
</dbReference>
<dbReference type="PROSITE" id="PS51194">
    <property type="entry name" value="HELICASE_CTER"/>
    <property type="match status" value="1"/>
</dbReference>
<comment type="function">
    <text evidence="6 7 8 9">ATP-dependent RNA helicase that unwinds RNA in a 3' to 5' direction and that plays an important role in mitochondrial mRNA editing, a process involving the addition and deletion of uridine (U) nucleotides in the pre-mRNA (PubMed:19850921, PubMed:26769962, PubMed:31034523). As part of the RET2-containing gRNA-binding (RET2-GRBC) complex, acts as a scaffold for the assembly of mRNA-gRNA hybrids and the recruitment of the RNA editing core (RECC) complex (PubMed:25928631, PubMed:26769962). Regulates several steps of mRNA editing by the MRBC3010/GRBC6 containing gRNA-binding (MRBC3010-GRBC) complex including loading of unedited mRNA, editing in the first sequence block and subsequent editing progression across multiple sequence blocks (PubMed:25928631). Also, regulates the RNA substrate content of the MRBC3010-GRBC complex as well as the association of this complex with mitoribosomes (PubMed:25928631).</text>
</comment>
<comment type="catalytic activity">
    <reaction evidence="6 9 12">
        <text>ATP + H2O = ADP + phosphate + H(+)</text>
        <dbReference type="Rhea" id="RHEA:13065"/>
        <dbReference type="ChEBI" id="CHEBI:15377"/>
        <dbReference type="ChEBI" id="CHEBI:15378"/>
        <dbReference type="ChEBI" id="CHEBI:30616"/>
        <dbReference type="ChEBI" id="CHEBI:43474"/>
        <dbReference type="ChEBI" id="CHEBI:456216"/>
        <dbReference type="EC" id="3.6.4.13"/>
    </reaction>
</comment>
<comment type="subunit">
    <text evidence="6 7 8 9">Component of the REH2-associated complex (REH2C) composed of helicase REH2, associated factors H2F1 and H2F2, and mRNAs at various editing stages; the formation of the complex is RNA-independent (PubMed:26769962, PubMed:31034523). Within the complex, interacts with H2F1; the interaction is direct (PubMed:26769962, PubMed:31034523). Interacts transiently, in a RNA-dependent manner, with various editing complexes including the RNA editing core (RECC) complex, the gRNA-binding (GRBC) complex (also known as the MRB1 complex) and the RNA editing mediator (REMC) complex (PubMed:19850921, PubMed:25928631, PubMed:26769962, PubMed:31034523). Interacts with GAP1/GRBC2 via RNA forming a variant of the GRBC complex known as REH2-GRBC complex (PubMed:19850921, PubMed:25928631, PubMed:26769962, PubMed:31034523). Interacts with mitochondrial ribosomes (PubMed:19850921).</text>
</comment>
<comment type="subcellular location">
    <subcellularLocation>
        <location evidence="6 7 8 9">Mitochondrion</location>
    </subcellularLocation>
</comment>
<comment type="developmental stage">
    <text evidence="6 7 8 9">Expressed at the procyclic stage (at protein level).</text>
</comment>
<comment type="domain">
    <text evidence="6 7">The DRBM domain is required for binding to guide RNAs (gRNA) and mRNAs which facilitates the association with the GRBC complex.</text>
</comment>
<comment type="disruption phenotype">
    <text evidence="6 7 8">RNAi-mediated knockdown at the procyclic stage causes a loss of RNA unwinding activity (PubMed:26769962). Reduces association of H2F1 and abolishes H2F2 association with components of various editing complexes (PubMed:26769962). RNAi-mediated knockdown at the procyclic stage inhibits editing at early 3' sites on pre-mRNA substrates without affecting the interactions between MRB3010/GRBC6, GAP1/GRBC2, RGG2, REL1 and gRNA (PubMed:25928631). Decreases the ratio of unedited mRNA substrates in the MRB3010/GRBC6-MRB complex and the association of never-edited mRNA and 9SrRNA with the MRB3010-MRB complex (PubMed:25928631). Also, causes a decrease in the steady-state levels of guide RNA (gRNA) (PubMed:19850921).</text>
</comment>
<comment type="similarity">
    <text evidence="11">Belongs to the DEAD box helicase family. DEAH subfamily.</text>
</comment>
<organism evidence="15">
    <name type="scientific">Trypanosoma brucei brucei (strain 927/4 GUTat10.1)</name>
    <dbReference type="NCBI Taxonomy" id="185431"/>
    <lineage>
        <taxon>Eukaryota</taxon>
        <taxon>Discoba</taxon>
        <taxon>Euglenozoa</taxon>
        <taxon>Kinetoplastea</taxon>
        <taxon>Metakinetoplastina</taxon>
        <taxon>Trypanosomatida</taxon>
        <taxon>Trypanosomatidae</taxon>
        <taxon>Trypanosoma</taxon>
    </lineage>
</organism>